<name>RUTD_ECO24</name>
<accession>A7ZKB4</accession>
<reference key="1">
    <citation type="journal article" date="2008" name="J. Bacteriol.">
        <title>The pangenome structure of Escherichia coli: comparative genomic analysis of E. coli commensal and pathogenic isolates.</title>
        <authorList>
            <person name="Rasko D.A."/>
            <person name="Rosovitz M.J."/>
            <person name="Myers G.S.A."/>
            <person name="Mongodin E.F."/>
            <person name="Fricke W.F."/>
            <person name="Gajer P."/>
            <person name="Crabtree J."/>
            <person name="Sebaihia M."/>
            <person name="Thomson N.R."/>
            <person name="Chaudhuri R."/>
            <person name="Henderson I.R."/>
            <person name="Sperandio V."/>
            <person name="Ravel J."/>
        </authorList>
    </citation>
    <scope>NUCLEOTIDE SEQUENCE [LARGE SCALE GENOMIC DNA]</scope>
    <source>
        <strain>E24377A / ETEC</strain>
    </source>
</reference>
<gene>
    <name evidence="1" type="primary">rutD</name>
    <name type="ordered locus">EcE24377A_1127</name>
</gene>
<organism>
    <name type="scientific">Escherichia coli O139:H28 (strain E24377A / ETEC)</name>
    <dbReference type="NCBI Taxonomy" id="331111"/>
    <lineage>
        <taxon>Bacteria</taxon>
        <taxon>Pseudomonadati</taxon>
        <taxon>Pseudomonadota</taxon>
        <taxon>Gammaproteobacteria</taxon>
        <taxon>Enterobacterales</taxon>
        <taxon>Enterobacteriaceae</taxon>
        <taxon>Escherichia</taxon>
    </lineage>
</organism>
<comment type="function">
    <text evidence="1">Involved in pyrimidine catabolism. May facilitate the hydrolysis of carbamate, a reaction that can also occur spontaneously.</text>
</comment>
<comment type="catalytic activity">
    <reaction evidence="1">
        <text>carbamate + 2 H(+) = NH4(+) + CO2</text>
        <dbReference type="Rhea" id="RHEA:15649"/>
        <dbReference type="ChEBI" id="CHEBI:13941"/>
        <dbReference type="ChEBI" id="CHEBI:15378"/>
        <dbReference type="ChEBI" id="CHEBI:16526"/>
        <dbReference type="ChEBI" id="CHEBI:28938"/>
    </reaction>
</comment>
<comment type="similarity">
    <text evidence="1">Belongs to the AB hydrolase superfamily. Hydrolase RutD family.</text>
</comment>
<feature type="chain" id="PRO_0000402950" description="Putative carbamate hydrolase RutD">
    <location>
        <begin position="1"/>
        <end position="266"/>
    </location>
</feature>
<keyword id="KW-0378">Hydrolase</keyword>
<keyword id="KW-1185">Reference proteome</keyword>
<evidence type="ECO:0000255" key="1">
    <source>
        <dbReference type="HAMAP-Rule" id="MF_00832"/>
    </source>
</evidence>
<protein>
    <recommendedName>
        <fullName evidence="1">Putative carbamate hydrolase RutD</fullName>
        <ecNumber evidence="1">3.5.1.-</ecNumber>
    </recommendedName>
    <alternativeName>
        <fullName evidence="1">Aminohydrolase</fullName>
    </alternativeName>
</protein>
<dbReference type="EC" id="3.5.1.-" evidence="1"/>
<dbReference type="EMBL" id="CP000800">
    <property type="protein sequence ID" value="ABV16624.1"/>
    <property type="molecule type" value="Genomic_DNA"/>
</dbReference>
<dbReference type="RefSeq" id="WP_012138029.1">
    <property type="nucleotide sequence ID" value="NC_009801.1"/>
</dbReference>
<dbReference type="SMR" id="A7ZKB4"/>
<dbReference type="ESTHER" id="ecoli-rutD">
    <property type="family name" value="RutD"/>
</dbReference>
<dbReference type="KEGG" id="ecw:EcE24377A_1127"/>
<dbReference type="HOGENOM" id="CLU_020336_50_1_6"/>
<dbReference type="Proteomes" id="UP000001122">
    <property type="component" value="Chromosome"/>
</dbReference>
<dbReference type="GO" id="GO:0016811">
    <property type="term" value="F:hydrolase activity, acting on carbon-nitrogen (but not peptide) bonds, in linear amides"/>
    <property type="evidence" value="ECO:0007669"/>
    <property type="project" value="InterPro"/>
</dbReference>
<dbReference type="GO" id="GO:0019740">
    <property type="term" value="P:nitrogen utilization"/>
    <property type="evidence" value="ECO:0007669"/>
    <property type="project" value="UniProtKB-UniRule"/>
</dbReference>
<dbReference type="GO" id="GO:0006212">
    <property type="term" value="P:uracil catabolic process"/>
    <property type="evidence" value="ECO:0007669"/>
    <property type="project" value="UniProtKB-UniRule"/>
</dbReference>
<dbReference type="FunFam" id="3.40.50.1820:FF:000052">
    <property type="entry name" value="Putative aminoacrylate hydrolase RutD"/>
    <property type="match status" value="1"/>
</dbReference>
<dbReference type="Gene3D" id="3.40.50.1820">
    <property type="entry name" value="alpha/beta hydrolase"/>
    <property type="match status" value="1"/>
</dbReference>
<dbReference type="HAMAP" id="MF_00832">
    <property type="entry name" value="RutD"/>
    <property type="match status" value="1"/>
</dbReference>
<dbReference type="InterPro" id="IPR000073">
    <property type="entry name" value="AB_hydrolase_1"/>
</dbReference>
<dbReference type="InterPro" id="IPR029058">
    <property type="entry name" value="AB_hydrolase_fold"/>
</dbReference>
<dbReference type="InterPro" id="IPR050266">
    <property type="entry name" value="AB_hydrolase_sf"/>
</dbReference>
<dbReference type="InterPro" id="IPR019913">
    <property type="entry name" value="Pyrimidine_utilisation_RutD"/>
</dbReference>
<dbReference type="NCBIfam" id="TIGR03611">
    <property type="entry name" value="RutD"/>
    <property type="match status" value="1"/>
</dbReference>
<dbReference type="PANTHER" id="PTHR43798">
    <property type="entry name" value="MONOACYLGLYCEROL LIPASE"/>
    <property type="match status" value="1"/>
</dbReference>
<dbReference type="Pfam" id="PF00561">
    <property type="entry name" value="Abhydrolase_1"/>
    <property type="match status" value="1"/>
</dbReference>
<dbReference type="SUPFAM" id="SSF53474">
    <property type="entry name" value="alpha/beta-Hydrolases"/>
    <property type="match status" value="1"/>
</dbReference>
<proteinExistence type="inferred from homology"/>
<sequence>MKLSLSPPPYADAPVVVLISGLGGSGSYWLPQLAVLEQEYQVVCYDQRGTGNNPDTLAEDYSITQMAAELHQALVAAGIERYAVVGHALGALVGMQLALDYPASVTVLISVNGWLRINAHTRRCFQVRERLLYSGGAQAWVEAQPLFLYPADWMAARAPRLEAEDALALAHFQGKNNLLRRLNALKRADFSHHADRIRCPVQIICASDDLLVPSACSSELHAALPDSQKMVMRYGGHACNVTDPETFNALLLNGLASLLHHREAAL</sequence>